<protein>
    <recommendedName>
        <fullName>Glutamate synthase [NADPH] large chain</fullName>
        <ecNumber evidence="3">1.4.1.13</ecNumber>
    </recommendedName>
    <alternativeName>
        <fullName>Glutamate synthase subunit alpha</fullName>
        <shortName>GLTS alpha chain</shortName>
    </alternativeName>
    <alternativeName>
        <fullName>NADPH-GOGAT</fullName>
    </alternativeName>
</protein>
<sequence>MLYDKSLERDNCGFGLIAHIEGEPSHKVVRTAIHALARMQHRGAILADGKTGDGCGLLLQKPDRFFRIVAQERGWRLAKNYAVGMLFLNKDPELAAAARRIVEEELQRETLSIVGWRDVPTNEGVLGEIALSSLPRIEQIFVNAPAGWRPRDMERRLFIARRRIEKRLEADKDFYVCSLSNLVNIYKGLCMPTDLPRFYLDLADLRLESAICLFHQRFSTNTVPRWPLAQPFRYLAHNGEINTITGNRQWARARTYKFQTPLIPDLHDAAPFVNETGSDSSSMDNMLELLLAGGMDIIRAMRLLVPPAWQNNPDMDPELRAFFDFNSMHMEPWDGPAGIVMSDGRFAACNLDRNGLRPARYVITKDKLITCASEVGIWDYQPDEVVEKGRVGPGELMVIDTRSGRILHSAETDDDLKSRHPYKEWMEKNVRRLVPFEDLPDEEVGSRELDDDTLASYQKQFNYSAEELDSVIRVLGENGQEAVGSMGDDTPFAVLSSQPRIIYDYFRQQFAQVTNPPIDPLREAHVMSLATSIGREMNVFCEAEGQAHRLSFKSPILLYSDFKQLTTMKEEHYRADTLDITFDVTKTTLEATVKELCDKAEKMVRSGTVLLVLSDRNIAKDRLPVPAPMAVGAIQTRLVDQSLRCDANIIVETASARDPHHFAVLLGFGATAIYPYLAYETLGRLVDTHAIAKDYRTVMLNYRNGINKGLYKIMSKMGISTIASYRCSKLFEAVGLHDDVVGLCFQGAVSRIGGASFEDFQQDLLNLSKRAWLARKPISQGGLLKYVHGGEYHAYNPDVVRTLQQAVQSGEYSDYQEYAKLVNERPATTLRDLLAITPGENAVNIADVEPASELFKRFDTAAMSIGALSPEAHEALAEAMNSIGGNSNSGEGGEDPARYGTNKVSRIKQVASGRFGVTPAYLVNADVIQIKVAQGAKPGEGGQLPGDKVTPYIAKLRYSVPGVTLISPPPHHDIYSIEDLAQLIFDLKQVNPKAMISVKLVSEPGVGTIATGVAKAYADLITIAGYDGGTGASPLSSVKYAGCPWELGLVETQQALVANGLRHKIRLQVDGGLKTGVDIIKAAILGAESFGFGTGPMVALGCKYLRICHLNNCATGVATQDDKLRKNHYHGLPFKVTNYFEFIARETRELMAQLGVTRLVDLIGRTDLLKELDGFTAKQQKLALSKLLETAEPHPGKALYCTENNPPFDNGLLNAQLLQQAKPFVDERQSKTFWFDIRNTDRSVGASLSGYIAQTHGDQGLAADPIKAYFNGTAGQSFGVWNAGGVELYLTGDANDYVGKGMAGGLIAIRPPVGSAFRSHEASIIGNTCLYGATGGRLYAAGRAGERFGVRNSGAITVVEGIGDNGCEYMTGGIVCILGKTGVNFGAGMTGGFAYVLDESGDFRKRVNPELVEVLSVDALAIHEEHLRGLITEHVQHTGSQRGEEILANWSTFATKFALVKPKSSDVKALLGHRSRSAAELRVQAQ</sequence>
<feature type="propeptide" id="PRO_0000011620">
    <location>
        <begin position="1"/>
        <end position="11"/>
    </location>
</feature>
<feature type="chain" id="PRO_0000011621" description="Glutamate synthase [NADPH] large chain">
    <location>
        <begin position="12"/>
        <end position="1486"/>
    </location>
</feature>
<feature type="domain" description="Glutamine amidotransferase type-2" evidence="2">
    <location>
        <begin position="12"/>
        <end position="402"/>
    </location>
</feature>
<feature type="active site" description="Nucleophile" evidence="2">
    <location>
        <position position="12"/>
    </location>
</feature>
<feature type="binding site" evidence="1">
    <location>
        <begin position="1049"/>
        <end position="1101"/>
    </location>
    <ligand>
        <name>FMN</name>
        <dbReference type="ChEBI" id="CHEBI:58210"/>
    </ligand>
</feature>
<feature type="binding site" evidence="1">
    <location>
        <position position="1102"/>
    </location>
    <ligand>
        <name>[3Fe-4S] cluster</name>
        <dbReference type="ChEBI" id="CHEBI:21137"/>
    </ligand>
</feature>
<feature type="binding site" evidence="1">
    <location>
        <position position="1108"/>
    </location>
    <ligand>
        <name>[3Fe-4S] cluster</name>
        <dbReference type="ChEBI" id="CHEBI:21137"/>
    </ligand>
</feature>
<feature type="binding site" evidence="1">
    <location>
        <position position="1113"/>
    </location>
    <ligand>
        <name>[3Fe-4S] cluster</name>
        <dbReference type="ChEBI" id="CHEBI:21137"/>
    </ligand>
</feature>
<feature type="sequence conflict" description="In Ref. 1; AAA23904." evidence="4" ref="1">
    <original>GWRLA</original>
    <variation>LAFR</variation>
    <location>
        <begin position="74"/>
        <end position="78"/>
    </location>
</feature>
<feature type="sequence conflict" description="In Ref. 1; AAA23904." evidence="4" ref="1">
    <original>E</original>
    <variation>N</variation>
    <location>
        <position position="109"/>
    </location>
</feature>
<feature type="sequence conflict" description="In Ref. 1; AAA23904." evidence="4" ref="1">
    <original>LCMPTDLPRFYLDLADLRLES</original>
    <variation>CVCRRICRVLSGSCGPASGM</variation>
    <location>
        <begin position="189"/>
        <end position="209"/>
    </location>
</feature>
<feature type="sequence conflict" description="In Ref. 1; AAA23904 and 4; AAA23906." evidence="4" ref="1 4">
    <original>LAQPFRYLAHNGEINTITGNRQWA</original>
    <variation>WRNRSAIWRITVKSTPSPVTANG</variation>
    <location>
        <begin position="228"/>
        <end position="251"/>
    </location>
</feature>
<feature type="sequence conflict" description="In Ref. 1; AAA23904." evidence="4" ref="1">
    <original>N</original>
    <variation>K</variation>
    <location>
        <position position="429"/>
    </location>
</feature>
<feature type="sequence conflict" description="In Ref. 1; AAA23904." evidence="4" ref="1">
    <original>A</original>
    <variation>T</variation>
    <location>
        <position position="543"/>
    </location>
</feature>
<feature type="sequence conflict" description="In Ref. 1; AAA23904." evidence="4" ref="1">
    <original>D</original>
    <variation>H</variation>
    <location>
        <position position="832"/>
    </location>
</feature>
<feature type="sequence conflict" description="In Ref. 1; AAA23904." evidence="4" ref="1">
    <original>THGDQ</original>
    <variation>DARRS</variation>
    <location>
        <begin position="1255"/>
        <end position="1259"/>
    </location>
</feature>
<feature type="sequence conflict" description="In Ref. 1; AAA23904." evidence="4" ref="1">
    <original>G</original>
    <variation>A</variation>
    <location>
        <position position="1342"/>
    </location>
</feature>
<feature type="sequence conflict" description="In Ref. 1; AAA23904." evidence="4" ref="1">
    <original>G</original>
    <variation>R</variation>
    <location>
        <position position="1345"/>
    </location>
</feature>
<reference key="1">
    <citation type="journal article" date="1987" name="Gene">
        <title>Determination of the nucleotide sequence for the glutamate synthase structural genes of Escherichia coli K-12.</title>
        <authorList>
            <person name="Oliver G."/>
            <person name="Gosset G."/>
            <person name="Sanchez-Pescador R."/>
            <person name="Lozoya E."/>
            <person name="Ku L.M."/>
            <person name="Flores N."/>
            <person name="Becerril B."/>
            <person name="Valle F."/>
            <person name="Bolivar F."/>
        </authorList>
    </citation>
    <scope>NUCLEOTIDE SEQUENCE [GENOMIC DNA]</scope>
    <scope>PARTIAL PROTEIN SEQUENCE</scope>
    <source>
        <strain>K12</strain>
    </source>
</reference>
<reference key="2">
    <citation type="journal article" date="1997" name="Science">
        <title>The complete genome sequence of Escherichia coli K-12.</title>
        <authorList>
            <person name="Blattner F.R."/>
            <person name="Plunkett G. III"/>
            <person name="Bloch C.A."/>
            <person name="Perna N.T."/>
            <person name="Burland V."/>
            <person name="Riley M."/>
            <person name="Collado-Vides J."/>
            <person name="Glasner J.D."/>
            <person name="Rode C.K."/>
            <person name="Mayhew G.F."/>
            <person name="Gregor J."/>
            <person name="Davis N.W."/>
            <person name="Kirkpatrick H.A."/>
            <person name="Goeden M.A."/>
            <person name="Rose D.J."/>
            <person name="Mau B."/>
            <person name="Shao Y."/>
        </authorList>
    </citation>
    <scope>NUCLEOTIDE SEQUENCE [LARGE SCALE GENOMIC DNA]</scope>
    <source>
        <strain>K12 / MG1655 / ATCC 47076</strain>
    </source>
</reference>
<reference key="3">
    <citation type="journal article" date="2006" name="Mol. Syst. Biol.">
        <title>Highly accurate genome sequences of Escherichia coli K-12 strains MG1655 and W3110.</title>
        <authorList>
            <person name="Hayashi K."/>
            <person name="Morooka N."/>
            <person name="Yamamoto Y."/>
            <person name="Fujita K."/>
            <person name="Isono K."/>
            <person name="Choi S."/>
            <person name="Ohtsubo E."/>
            <person name="Baba T."/>
            <person name="Wanner B.L."/>
            <person name="Mori H."/>
            <person name="Horiuchi T."/>
        </authorList>
    </citation>
    <scope>NUCLEOTIDE SEQUENCE [LARGE SCALE GENOMIC DNA]</scope>
    <source>
        <strain>K12 / W3110 / ATCC 27325 / DSM 5911</strain>
    </source>
</reference>
<reference key="4">
    <citation type="journal article" date="1991" name="J. Bacteriol.">
        <title>Mutations affecting the Shine-Dalgarno sequences of the untranslated region of the Escherichia coli gltBDF operon.</title>
        <authorList>
            <person name="Velazquez L."/>
            <person name="Camarena L."/>
            <person name="Reyes J.L."/>
            <person name="Bastarrachea F."/>
        </authorList>
    </citation>
    <scope>NUCLEOTIDE SEQUENCE [GENOMIC DNA] OF 1-273</scope>
</reference>
<reference key="5">
    <citation type="journal article" date="1972" name="J. Biol. Chem.">
        <title>Glutamate synthase from Escherichia coli. An iron-sulfide flavoprotein.</title>
        <authorList>
            <person name="Miller R.E."/>
            <person name="Stadtman E.R."/>
        </authorList>
    </citation>
    <scope>FUNCTION</scope>
    <scope>CATALYTIC ACTIVITY</scope>
    <scope>COFACTOR</scope>
    <scope>BIOPHYSICOCHEMICAL PROPERTIES</scope>
    <scope>SUBUNIT</scope>
    <source>
        <strain>W</strain>
    </source>
</reference>
<reference key="6">
    <citation type="journal article" date="1989" name="Protein Seq. Data Anal.">
        <title>Amino acid sequence analysis of the glutamate synthase enzyme from Escherichia coli K-12.</title>
        <authorList>
            <person name="Gosset G."/>
            <person name="Merino E."/>
            <person name="Recillas F."/>
            <person name="Oliver G."/>
            <person name="Becerril B."/>
            <person name="Bolivar F."/>
        </authorList>
    </citation>
    <scope>DISCUSSION OF SEQUENCE</scope>
</reference>
<comment type="function">
    <text evidence="3">Catalyzes the conversion of L-glutamine and 2-oxoglutarate into two molecules of L-glutamate.</text>
</comment>
<comment type="catalytic activity">
    <reaction evidence="3">
        <text>2 L-glutamate + NADP(+) = L-glutamine + 2-oxoglutarate + NADPH + H(+)</text>
        <dbReference type="Rhea" id="RHEA:15501"/>
        <dbReference type="ChEBI" id="CHEBI:15378"/>
        <dbReference type="ChEBI" id="CHEBI:16810"/>
        <dbReference type="ChEBI" id="CHEBI:29985"/>
        <dbReference type="ChEBI" id="CHEBI:57783"/>
        <dbReference type="ChEBI" id="CHEBI:58349"/>
        <dbReference type="ChEBI" id="CHEBI:58359"/>
        <dbReference type="EC" id="1.4.1.13"/>
    </reaction>
</comment>
<comment type="cofactor">
    <cofactor evidence="1">
        <name>[3Fe-4S] cluster</name>
        <dbReference type="ChEBI" id="CHEBI:21137"/>
    </cofactor>
    <text evidence="1">Binds 1 [3Fe-4S] cluster.</text>
</comment>
<comment type="cofactor">
    <cofactor evidence="3">
        <name>FAD</name>
        <dbReference type="ChEBI" id="CHEBI:57692"/>
    </cofactor>
</comment>
<comment type="cofactor">
    <cofactor evidence="3">
        <name>FMN</name>
        <dbReference type="ChEBI" id="CHEBI:58210"/>
    </cofactor>
</comment>
<comment type="biophysicochemical properties">
    <kinetics>
        <KM evidence="3">7.3 uM for 2-oxoglutarate</KM>
        <KM evidence="3">250 uM for L-glutamine</KM>
    </kinetics>
    <phDependence>
        <text evidence="3">Optimum pH is 7.6.</text>
    </phDependence>
</comment>
<comment type="pathway">
    <text>Amino-acid biosynthesis; L-glutamate biosynthesis via GLT pathway; L-glutamate from 2-oxoglutarate and L-glutamine (NADP(+) route): step 1/1.</text>
</comment>
<comment type="pathway">
    <text>Energy metabolism; nitrogen metabolism.</text>
</comment>
<comment type="subunit">
    <text evidence="3">Aggregate of 4 catalytic active heterodimers, consisting of a large and a small subunit.</text>
</comment>
<comment type="interaction">
    <interactant intactId="EBI-551179">
        <id>P09831</id>
    </interactant>
    <interactant intactId="EBI-544293">
        <id>P09832</id>
        <label>gltD</label>
    </interactant>
    <organismsDiffer>false</organismsDiffer>
    <experiments>3</experiments>
</comment>
<comment type="miscellaneous">
    <text>Glutamine binds to the large subunit and transfers the amido group to 2-oxoglutarate that apparently binds to the small subunit.</text>
</comment>
<comment type="similarity">
    <text evidence="4">Belongs to the glutamate synthase family.</text>
</comment>
<comment type="sequence caution" evidence="4">
    <conflict type="erroneous initiation">
        <sequence resource="EMBL-CDS" id="AAA23904"/>
    </conflict>
    <text>Extended N-terminus.</text>
</comment>
<comment type="sequence caution" evidence="4">
    <conflict type="erroneous initiation">
        <sequence resource="EMBL-CDS" id="AAA23906"/>
    </conflict>
    <text>Extended N-terminus.</text>
</comment>
<comment type="sequence caution" evidence="4">
    <conflict type="erroneous initiation">
        <sequence resource="EMBL-CDS" id="AAA58014"/>
    </conflict>
    <text>Extended N-terminus.</text>
</comment>
<comment type="sequence caution" evidence="4">
    <conflict type="erroneous initiation">
        <sequence resource="EMBL-CDS" id="BAE77256"/>
    </conflict>
    <text>Extended N-terminus.</text>
</comment>
<proteinExistence type="evidence at protein level"/>
<keyword id="KW-0003">3Fe-4S</keyword>
<keyword id="KW-0028">Amino-acid biosynthesis</keyword>
<keyword id="KW-0903">Direct protein sequencing</keyword>
<keyword id="KW-0274">FAD</keyword>
<keyword id="KW-0285">Flavoprotein</keyword>
<keyword id="KW-0288">FMN</keyword>
<keyword id="KW-0314">Glutamate biosynthesis</keyword>
<keyword id="KW-0315">Glutamine amidotransferase</keyword>
<keyword id="KW-0408">Iron</keyword>
<keyword id="KW-0411">Iron-sulfur</keyword>
<keyword id="KW-0479">Metal-binding</keyword>
<keyword id="KW-0521">NADP</keyword>
<keyword id="KW-0560">Oxidoreductase</keyword>
<keyword id="KW-1185">Reference proteome</keyword>
<keyword id="KW-0865">Zymogen</keyword>
<accession>P09831</accession>
<accession>Q2M900</accession>
<name>GLTB_ECOLI</name>
<gene>
    <name type="primary">gltB</name>
    <name type="synonym">aspB</name>
    <name type="ordered locus">b3212</name>
    <name type="ordered locus">JW3179</name>
</gene>
<evidence type="ECO:0000250" key="1"/>
<evidence type="ECO:0000255" key="2">
    <source>
        <dbReference type="PROSITE-ProRule" id="PRU00609"/>
    </source>
</evidence>
<evidence type="ECO:0000269" key="3">
    <source>
    </source>
</evidence>
<evidence type="ECO:0000305" key="4"/>
<dbReference type="EC" id="1.4.1.13" evidence="3"/>
<dbReference type="EMBL" id="M18747">
    <property type="protein sequence ID" value="AAA23904.1"/>
    <property type="status" value="ALT_INIT"/>
    <property type="molecule type" value="Genomic_DNA"/>
</dbReference>
<dbReference type="EMBL" id="U18997">
    <property type="protein sequence ID" value="AAA58014.1"/>
    <property type="status" value="ALT_INIT"/>
    <property type="molecule type" value="Genomic_DNA"/>
</dbReference>
<dbReference type="EMBL" id="U00096">
    <property type="protein sequence ID" value="AAC76244.2"/>
    <property type="molecule type" value="Genomic_DNA"/>
</dbReference>
<dbReference type="EMBL" id="AP009048">
    <property type="protein sequence ID" value="BAE77256.1"/>
    <property type="status" value="ALT_INIT"/>
    <property type="molecule type" value="Genomic_DNA"/>
</dbReference>
<dbReference type="EMBL" id="M68876">
    <property type="protein sequence ID" value="AAA23906.1"/>
    <property type="status" value="ALT_INIT"/>
    <property type="molecule type" value="Genomic_DNA"/>
</dbReference>
<dbReference type="PIR" id="F65112">
    <property type="entry name" value="F65112"/>
</dbReference>
<dbReference type="RefSeq" id="NP_417679.2">
    <property type="nucleotide sequence ID" value="NC_000913.3"/>
</dbReference>
<dbReference type="RefSeq" id="WP_001300352.1">
    <property type="nucleotide sequence ID" value="NZ_LN832404.1"/>
</dbReference>
<dbReference type="SMR" id="P09831"/>
<dbReference type="BioGRID" id="4263210">
    <property type="interactions" value="358"/>
</dbReference>
<dbReference type="BioGRID" id="852037">
    <property type="interactions" value="1"/>
</dbReference>
<dbReference type="ComplexPortal" id="CPX-5041">
    <property type="entry name" value="Glutamate synthase [NADPH] complex"/>
</dbReference>
<dbReference type="DIP" id="DIP-9802N"/>
<dbReference type="FunCoup" id="P09831">
    <property type="interactions" value="752"/>
</dbReference>
<dbReference type="IntAct" id="P09831">
    <property type="interactions" value="8"/>
</dbReference>
<dbReference type="STRING" id="511145.b3212"/>
<dbReference type="MEROPS" id="C44.003"/>
<dbReference type="jPOST" id="P09831"/>
<dbReference type="PaxDb" id="511145-b3212"/>
<dbReference type="EnsemblBacteria" id="AAC76244">
    <property type="protein sequence ID" value="AAC76244"/>
    <property type="gene ID" value="b3212"/>
</dbReference>
<dbReference type="GeneID" id="947724"/>
<dbReference type="KEGG" id="ecj:JW3179"/>
<dbReference type="KEGG" id="eco:b3212"/>
<dbReference type="KEGG" id="ecoc:C3026_17475"/>
<dbReference type="PATRIC" id="fig|511145.12.peg.3307"/>
<dbReference type="EchoBASE" id="EB0398"/>
<dbReference type="eggNOG" id="COG0067">
    <property type="taxonomic scope" value="Bacteria"/>
</dbReference>
<dbReference type="eggNOG" id="COG0069">
    <property type="taxonomic scope" value="Bacteria"/>
</dbReference>
<dbReference type="eggNOG" id="COG0070">
    <property type="taxonomic scope" value="Bacteria"/>
</dbReference>
<dbReference type="HOGENOM" id="CLU_000422_8_2_6"/>
<dbReference type="InParanoid" id="P09831"/>
<dbReference type="OMA" id="WDGPAAM"/>
<dbReference type="OrthoDB" id="9758182at2"/>
<dbReference type="PhylomeDB" id="P09831"/>
<dbReference type="BioCyc" id="EcoCyc:GLUSYNLARGE-MONOMER"/>
<dbReference type="BioCyc" id="MetaCyc:GLUSYNLARGE-MONOMER"/>
<dbReference type="BRENDA" id="1.4.1.13">
    <property type="organism ID" value="2026"/>
</dbReference>
<dbReference type="SABIO-RK" id="P09831"/>
<dbReference type="UniPathway" id="UPA00045"/>
<dbReference type="UniPathway" id="UPA00634">
    <property type="reaction ID" value="UER00689"/>
</dbReference>
<dbReference type="PRO" id="PR:P09831"/>
<dbReference type="Proteomes" id="UP000000625">
    <property type="component" value="Chromosome"/>
</dbReference>
<dbReference type="GO" id="GO:0005829">
    <property type="term" value="C:cytosol"/>
    <property type="evidence" value="ECO:0000314"/>
    <property type="project" value="EcoCyc"/>
</dbReference>
<dbReference type="GO" id="GO:0009342">
    <property type="term" value="C:glutamate synthase complex (NADPH)"/>
    <property type="evidence" value="ECO:0000353"/>
    <property type="project" value="ComplexPortal"/>
</dbReference>
<dbReference type="GO" id="GO:0051538">
    <property type="term" value="F:3 iron, 4 sulfur cluster binding"/>
    <property type="evidence" value="ECO:0007669"/>
    <property type="project" value="UniProtKB-KW"/>
</dbReference>
<dbReference type="GO" id="GO:0004355">
    <property type="term" value="F:glutamate synthase (NADPH) activity"/>
    <property type="evidence" value="ECO:0000314"/>
    <property type="project" value="EcoCyc"/>
</dbReference>
<dbReference type="GO" id="GO:0015930">
    <property type="term" value="F:glutamate synthase activity"/>
    <property type="evidence" value="ECO:0000318"/>
    <property type="project" value="GO_Central"/>
</dbReference>
<dbReference type="GO" id="GO:0046872">
    <property type="term" value="F:metal ion binding"/>
    <property type="evidence" value="ECO:0007669"/>
    <property type="project" value="UniProtKB-KW"/>
</dbReference>
<dbReference type="GO" id="GO:0019676">
    <property type="term" value="P:ammonia assimilation cycle"/>
    <property type="evidence" value="ECO:0000314"/>
    <property type="project" value="ComplexPortal"/>
</dbReference>
<dbReference type="GO" id="GO:0006537">
    <property type="term" value="P:glutamate biosynthetic process"/>
    <property type="evidence" value="ECO:0000314"/>
    <property type="project" value="EcoCyc"/>
</dbReference>
<dbReference type="GO" id="GO:0097054">
    <property type="term" value="P:L-glutamate biosynthetic process"/>
    <property type="evidence" value="ECO:0000314"/>
    <property type="project" value="ComplexPortal"/>
</dbReference>
<dbReference type="CDD" id="cd00982">
    <property type="entry name" value="gltB_C"/>
    <property type="match status" value="1"/>
</dbReference>
<dbReference type="CDD" id="cd00713">
    <property type="entry name" value="GltS"/>
    <property type="match status" value="1"/>
</dbReference>
<dbReference type="CDD" id="cd02808">
    <property type="entry name" value="GltS_FMN"/>
    <property type="match status" value="1"/>
</dbReference>
<dbReference type="FunFam" id="3.20.20.70:FF:000061">
    <property type="entry name" value="Glutamate synthase large subunit"/>
    <property type="match status" value="1"/>
</dbReference>
<dbReference type="FunFam" id="2.160.20.60:FF:000002">
    <property type="entry name" value="Glutamate synthase, large subunit"/>
    <property type="match status" value="1"/>
</dbReference>
<dbReference type="FunFam" id="3.20.20.70:FF:000109">
    <property type="entry name" value="Glutamate synthase, large subunit"/>
    <property type="match status" value="1"/>
</dbReference>
<dbReference type="FunFam" id="3.60.20.10:FF:000001">
    <property type="entry name" value="Glutamate synthase, large subunit"/>
    <property type="match status" value="1"/>
</dbReference>
<dbReference type="Gene3D" id="3.20.20.70">
    <property type="entry name" value="Aldolase class I"/>
    <property type="match status" value="2"/>
</dbReference>
<dbReference type="Gene3D" id="2.160.20.60">
    <property type="entry name" value="Glutamate synthase, alpha subunit, C-terminal domain"/>
    <property type="match status" value="1"/>
</dbReference>
<dbReference type="Gene3D" id="3.60.20.10">
    <property type="entry name" value="Glutamine Phosphoribosylpyrophosphate, subunit 1, domain 1"/>
    <property type="match status" value="1"/>
</dbReference>
<dbReference type="InterPro" id="IPR013785">
    <property type="entry name" value="Aldolase_TIM"/>
</dbReference>
<dbReference type="InterPro" id="IPR050711">
    <property type="entry name" value="ET-N_metabolism_enzyme"/>
</dbReference>
<dbReference type="InterPro" id="IPR017932">
    <property type="entry name" value="GATase_2_dom"/>
</dbReference>
<dbReference type="InterPro" id="IPR002489">
    <property type="entry name" value="Glu_synth_asu_C"/>
</dbReference>
<dbReference type="InterPro" id="IPR036485">
    <property type="entry name" value="Glu_synth_asu_C_sf"/>
</dbReference>
<dbReference type="InterPro" id="IPR006982">
    <property type="entry name" value="Glu_synth_centr_N"/>
</dbReference>
<dbReference type="InterPro" id="IPR002932">
    <property type="entry name" value="Glu_synthdom"/>
</dbReference>
<dbReference type="InterPro" id="IPR029055">
    <property type="entry name" value="Ntn_hydrolases_N"/>
</dbReference>
<dbReference type="NCBIfam" id="NF008730">
    <property type="entry name" value="PRK11750.1"/>
    <property type="match status" value="1"/>
</dbReference>
<dbReference type="PANTHER" id="PTHR11938">
    <property type="entry name" value="FAD NADPH DEHYDROGENASE/OXIDOREDUCTASE"/>
    <property type="match status" value="1"/>
</dbReference>
<dbReference type="PANTHER" id="PTHR11938:SF148">
    <property type="entry name" value="GLUTAMATE SYNTHASE [NADPH] LARGE CHAIN"/>
    <property type="match status" value="1"/>
</dbReference>
<dbReference type="Pfam" id="PF00310">
    <property type="entry name" value="GATase_2"/>
    <property type="match status" value="1"/>
</dbReference>
<dbReference type="Pfam" id="PF04898">
    <property type="entry name" value="Glu_syn_central"/>
    <property type="match status" value="1"/>
</dbReference>
<dbReference type="Pfam" id="PF01645">
    <property type="entry name" value="Glu_synthase"/>
    <property type="match status" value="1"/>
</dbReference>
<dbReference type="Pfam" id="PF01493">
    <property type="entry name" value="GXGXG"/>
    <property type="match status" value="1"/>
</dbReference>
<dbReference type="SUPFAM" id="SSF69336">
    <property type="entry name" value="Alpha subunit of glutamate synthase, C-terminal domain"/>
    <property type="match status" value="1"/>
</dbReference>
<dbReference type="SUPFAM" id="SSF51395">
    <property type="entry name" value="FMN-linked oxidoreductases"/>
    <property type="match status" value="1"/>
</dbReference>
<dbReference type="SUPFAM" id="SSF56235">
    <property type="entry name" value="N-terminal nucleophile aminohydrolases (Ntn hydrolases)"/>
    <property type="match status" value="1"/>
</dbReference>
<dbReference type="PROSITE" id="PS51278">
    <property type="entry name" value="GATASE_TYPE_2"/>
    <property type="match status" value="1"/>
</dbReference>
<organism>
    <name type="scientific">Escherichia coli (strain K12)</name>
    <dbReference type="NCBI Taxonomy" id="83333"/>
    <lineage>
        <taxon>Bacteria</taxon>
        <taxon>Pseudomonadati</taxon>
        <taxon>Pseudomonadota</taxon>
        <taxon>Gammaproteobacteria</taxon>
        <taxon>Enterobacterales</taxon>
        <taxon>Enterobacteriaceae</taxon>
        <taxon>Escherichia</taxon>
    </lineage>
</organism>